<evidence type="ECO:0000250" key="1"/>
<evidence type="ECO:0000255" key="2">
    <source>
        <dbReference type="PROSITE-ProRule" id="PRU00159"/>
    </source>
</evidence>
<evidence type="ECO:0000255" key="3">
    <source>
        <dbReference type="PROSITE-ProRule" id="PRU00618"/>
    </source>
</evidence>
<evidence type="ECO:0000255" key="4">
    <source>
        <dbReference type="PROSITE-ProRule" id="PRU10027"/>
    </source>
</evidence>
<evidence type="ECO:0000256" key="5">
    <source>
        <dbReference type="SAM" id="MobiDB-lite"/>
    </source>
</evidence>
<evidence type="ECO:0000305" key="6"/>
<protein>
    <recommendedName>
        <fullName>Serine/threonine-protein kinase Sgk1-B</fullName>
        <ecNumber>2.7.11.1</ecNumber>
    </recommendedName>
    <alternativeName>
        <fullName>Serum/glucocorticoid-regulated kinase 1-B</fullName>
    </alternativeName>
</protein>
<comment type="function">
    <text evidence="1">Protein kinase that may play an important role in cellular stress response. Plays an important role in activating certain potassium, sodium, and chloride channels, suggesting an involvement in the regulation of processes such as cell survival, neuronal excitability and renal sodium excretion (By similarity).</text>
</comment>
<comment type="catalytic activity">
    <reaction>
        <text>L-seryl-[protein] + ATP = O-phospho-L-seryl-[protein] + ADP + H(+)</text>
        <dbReference type="Rhea" id="RHEA:17989"/>
        <dbReference type="Rhea" id="RHEA-COMP:9863"/>
        <dbReference type="Rhea" id="RHEA-COMP:11604"/>
        <dbReference type="ChEBI" id="CHEBI:15378"/>
        <dbReference type="ChEBI" id="CHEBI:29999"/>
        <dbReference type="ChEBI" id="CHEBI:30616"/>
        <dbReference type="ChEBI" id="CHEBI:83421"/>
        <dbReference type="ChEBI" id="CHEBI:456216"/>
        <dbReference type="EC" id="2.7.11.1"/>
    </reaction>
</comment>
<comment type="catalytic activity">
    <reaction>
        <text>L-threonyl-[protein] + ATP = O-phospho-L-threonyl-[protein] + ADP + H(+)</text>
        <dbReference type="Rhea" id="RHEA:46608"/>
        <dbReference type="Rhea" id="RHEA-COMP:11060"/>
        <dbReference type="Rhea" id="RHEA-COMP:11605"/>
        <dbReference type="ChEBI" id="CHEBI:15378"/>
        <dbReference type="ChEBI" id="CHEBI:30013"/>
        <dbReference type="ChEBI" id="CHEBI:30616"/>
        <dbReference type="ChEBI" id="CHEBI:61977"/>
        <dbReference type="ChEBI" id="CHEBI:456216"/>
        <dbReference type="EC" id="2.7.11.1"/>
    </reaction>
</comment>
<comment type="subcellular location">
    <subcellularLocation>
        <location evidence="1">Cytoplasm</location>
    </subcellularLocation>
    <subcellularLocation>
        <location evidence="1">Nucleus</location>
    </subcellularLocation>
    <subcellularLocation>
        <location evidence="1">Endoplasmic reticulum</location>
    </subcellularLocation>
</comment>
<comment type="similarity">
    <text evidence="6">Belongs to the protein kinase superfamily. AGC Ser/Thr protein kinase family.</text>
</comment>
<proteinExistence type="evidence at transcript level"/>
<organism>
    <name type="scientific">Xenopus laevis</name>
    <name type="common">African clawed frog</name>
    <dbReference type="NCBI Taxonomy" id="8355"/>
    <lineage>
        <taxon>Eukaryota</taxon>
        <taxon>Metazoa</taxon>
        <taxon>Chordata</taxon>
        <taxon>Craniata</taxon>
        <taxon>Vertebrata</taxon>
        <taxon>Euteleostomi</taxon>
        <taxon>Amphibia</taxon>
        <taxon>Batrachia</taxon>
        <taxon>Anura</taxon>
        <taxon>Pipoidea</taxon>
        <taxon>Pipidae</taxon>
        <taxon>Xenopodinae</taxon>
        <taxon>Xenopus</taxon>
        <taxon>Xenopus</taxon>
    </lineage>
</organism>
<sequence>MTVKTETAAGASTLTYSKMRGMVALLIAFMKQRRMGLNEFIQKIATNSSYSCKPSEVQSILNISPPQESELLNENSSPPPSHSQQINLGPSSNPHAKPSDFQFLKIIGKGSFGKVLLARHKADEKFYAVKVLQKKAILKKKEEKHIMSERNVLLKNVKHPFLVGLHFSIQTTSRLYFILDYINGGELFYHLQRERCFLEPRARFYAAEIASALGYLHSLNIVYRDLKPENILLDSQGHIVLTDFGLCKENIEPNGITSTFCGTPEYLAPEVLHKQPYDRTVDWWCLGAVLYEMLYGLPPFYSRNTAEMYDNILNKPLQLKPNITNSARNLLEGLLQKDRTKRTGAKTDFMEIKNHIFFSPIDWDDLINKKITPPFNPNVSGPSDLQHFDPEFTDEPVPNSIGQSPDSILITASIKEAAEAFMGFSYAPPMDSYL</sequence>
<keyword id="KW-0053">Apoptosis</keyword>
<keyword id="KW-0067">ATP-binding</keyword>
<keyword id="KW-0963">Cytoplasm</keyword>
<keyword id="KW-0256">Endoplasmic reticulum</keyword>
<keyword id="KW-0418">Kinase</keyword>
<keyword id="KW-0547">Nucleotide-binding</keyword>
<keyword id="KW-0539">Nucleus</keyword>
<keyword id="KW-0597">Phosphoprotein</keyword>
<keyword id="KW-1185">Reference proteome</keyword>
<keyword id="KW-0723">Serine/threonine-protein kinase</keyword>
<keyword id="KW-0346">Stress response</keyword>
<keyword id="KW-0808">Transferase</keyword>
<gene>
    <name type="primary">sgk1-b</name>
    <name type="synonym">sgk-b</name>
</gene>
<name>SGK1B_XENLA</name>
<dbReference type="EC" id="2.7.11.1"/>
<dbReference type="EMBL" id="BC074305">
    <property type="protein sequence ID" value="AAH74305.1"/>
    <property type="molecule type" value="mRNA"/>
</dbReference>
<dbReference type="RefSeq" id="NP_001086189.1">
    <property type="nucleotide sequence ID" value="NM_001092720.1"/>
</dbReference>
<dbReference type="SMR" id="Q6GLY8"/>
<dbReference type="DNASU" id="444618"/>
<dbReference type="GeneID" id="444618"/>
<dbReference type="KEGG" id="xla:444618"/>
<dbReference type="AGR" id="Xenbase:XB-GENE-6254615"/>
<dbReference type="CTD" id="444618"/>
<dbReference type="Xenbase" id="XB-GENE-6254615">
    <property type="gene designation" value="sgk1.S"/>
</dbReference>
<dbReference type="OMA" id="CVIYDMM"/>
<dbReference type="OrthoDB" id="63267at2759"/>
<dbReference type="Proteomes" id="UP000186698">
    <property type="component" value="Chromosome 5S"/>
</dbReference>
<dbReference type="Bgee" id="444618">
    <property type="expression patterns" value="Expressed in camera-type eye and 19 other cell types or tissues"/>
</dbReference>
<dbReference type="GO" id="GO:0005737">
    <property type="term" value="C:cytoplasm"/>
    <property type="evidence" value="ECO:0000318"/>
    <property type="project" value="GO_Central"/>
</dbReference>
<dbReference type="GO" id="GO:0005783">
    <property type="term" value="C:endoplasmic reticulum"/>
    <property type="evidence" value="ECO:0007669"/>
    <property type="project" value="UniProtKB-SubCell"/>
</dbReference>
<dbReference type="GO" id="GO:0005634">
    <property type="term" value="C:nucleus"/>
    <property type="evidence" value="ECO:0000318"/>
    <property type="project" value="GO_Central"/>
</dbReference>
<dbReference type="GO" id="GO:0005524">
    <property type="term" value="F:ATP binding"/>
    <property type="evidence" value="ECO:0007669"/>
    <property type="project" value="UniProtKB-KW"/>
</dbReference>
<dbReference type="GO" id="GO:0106310">
    <property type="term" value="F:protein serine kinase activity"/>
    <property type="evidence" value="ECO:0007669"/>
    <property type="project" value="RHEA"/>
</dbReference>
<dbReference type="GO" id="GO:0004674">
    <property type="term" value="F:protein serine/threonine kinase activity"/>
    <property type="evidence" value="ECO:0000318"/>
    <property type="project" value="GO_Central"/>
</dbReference>
<dbReference type="GO" id="GO:0006915">
    <property type="term" value="P:apoptotic process"/>
    <property type="evidence" value="ECO:0007669"/>
    <property type="project" value="UniProtKB-KW"/>
</dbReference>
<dbReference type="FunFam" id="1.10.510.10:FF:000065">
    <property type="entry name" value="Non-specific serine/threonine protein kinase"/>
    <property type="match status" value="1"/>
</dbReference>
<dbReference type="FunFam" id="3.30.200.20:FF:000030">
    <property type="entry name" value="Non-specific serine/threonine protein kinase"/>
    <property type="match status" value="1"/>
</dbReference>
<dbReference type="Gene3D" id="3.30.200.20">
    <property type="entry name" value="Phosphorylase Kinase, domain 1"/>
    <property type="match status" value="1"/>
</dbReference>
<dbReference type="Gene3D" id="1.10.510.10">
    <property type="entry name" value="Transferase(Phosphotransferase) domain 1"/>
    <property type="match status" value="1"/>
</dbReference>
<dbReference type="InterPro" id="IPR000961">
    <property type="entry name" value="AGC-kinase_C"/>
</dbReference>
<dbReference type="InterPro" id="IPR011009">
    <property type="entry name" value="Kinase-like_dom_sf"/>
</dbReference>
<dbReference type="InterPro" id="IPR017892">
    <property type="entry name" value="Pkinase_C"/>
</dbReference>
<dbReference type="InterPro" id="IPR000719">
    <property type="entry name" value="Prot_kinase_dom"/>
</dbReference>
<dbReference type="InterPro" id="IPR017441">
    <property type="entry name" value="Protein_kinase_ATP_BS"/>
</dbReference>
<dbReference type="InterPro" id="IPR008271">
    <property type="entry name" value="Ser/Thr_kinase_AS"/>
</dbReference>
<dbReference type="PANTHER" id="PTHR24351">
    <property type="entry name" value="RIBOSOMAL PROTEIN S6 KINASE"/>
    <property type="match status" value="1"/>
</dbReference>
<dbReference type="Pfam" id="PF00069">
    <property type="entry name" value="Pkinase"/>
    <property type="match status" value="1"/>
</dbReference>
<dbReference type="Pfam" id="PF00433">
    <property type="entry name" value="Pkinase_C"/>
    <property type="match status" value="1"/>
</dbReference>
<dbReference type="SMART" id="SM00133">
    <property type="entry name" value="S_TK_X"/>
    <property type="match status" value="1"/>
</dbReference>
<dbReference type="SMART" id="SM00220">
    <property type="entry name" value="S_TKc"/>
    <property type="match status" value="1"/>
</dbReference>
<dbReference type="SUPFAM" id="SSF56112">
    <property type="entry name" value="Protein kinase-like (PK-like)"/>
    <property type="match status" value="1"/>
</dbReference>
<dbReference type="PROSITE" id="PS51285">
    <property type="entry name" value="AGC_KINASE_CTER"/>
    <property type="match status" value="1"/>
</dbReference>
<dbReference type="PROSITE" id="PS00107">
    <property type="entry name" value="PROTEIN_KINASE_ATP"/>
    <property type="match status" value="1"/>
</dbReference>
<dbReference type="PROSITE" id="PS50011">
    <property type="entry name" value="PROTEIN_KINASE_DOM"/>
    <property type="match status" value="1"/>
</dbReference>
<dbReference type="PROSITE" id="PS00108">
    <property type="entry name" value="PROTEIN_KINASE_ST"/>
    <property type="match status" value="1"/>
</dbReference>
<reference key="1">
    <citation type="submission" date="2004-06" db="EMBL/GenBank/DDBJ databases">
        <authorList>
            <consortium name="NIH - Xenopus Gene Collection (XGC) project"/>
        </authorList>
    </citation>
    <scope>NUCLEOTIDE SEQUENCE [LARGE SCALE MRNA]</scope>
    <source>
        <tissue>Brain</tissue>
    </source>
</reference>
<feature type="chain" id="PRO_0000380134" description="Serine/threonine-protein kinase Sgk1-B">
    <location>
        <begin position="1"/>
        <end position="434"/>
    </location>
</feature>
<feature type="domain" description="Protein kinase" evidence="2">
    <location>
        <begin position="101"/>
        <end position="358"/>
    </location>
</feature>
<feature type="domain" description="AGC-kinase C-terminal" evidence="3">
    <location>
        <begin position="359"/>
        <end position="434"/>
    </location>
</feature>
<feature type="region of interest" description="Disordered" evidence="5">
    <location>
        <begin position="68"/>
        <end position="94"/>
    </location>
</feature>
<feature type="active site" description="Proton acceptor" evidence="2 4">
    <location>
        <position position="225"/>
    </location>
</feature>
<feature type="binding site" evidence="2">
    <location>
        <begin position="107"/>
        <end position="115"/>
    </location>
    <ligand>
        <name>ATP</name>
        <dbReference type="ChEBI" id="CHEBI:30616"/>
    </ligand>
</feature>
<feature type="binding site" evidence="2">
    <location>
        <position position="130"/>
    </location>
    <ligand>
        <name>ATP</name>
        <dbReference type="ChEBI" id="CHEBI:30616"/>
    </ligand>
</feature>
<accession>Q6GLY8</accession>